<feature type="chain" id="PRO_0000111826" description="5'/3'-nucleotidase SurE">
    <location>
        <begin position="1"/>
        <end position="254"/>
    </location>
</feature>
<feature type="binding site" evidence="1">
    <location>
        <position position="9"/>
    </location>
    <ligand>
        <name>a divalent metal cation</name>
        <dbReference type="ChEBI" id="CHEBI:60240"/>
    </ligand>
</feature>
<feature type="binding site" evidence="1">
    <location>
        <position position="10"/>
    </location>
    <ligand>
        <name>a divalent metal cation</name>
        <dbReference type="ChEBI" id="CHEBI:60240"/>
    </ligand>
</feature>
<feature type="binding site" evidence="1">
    <location>
        <position position="40"/>
    </location>
    <ligand>
        <name>a divalent metal cation</name>
        <dbReference type="ChEBI" id="CHEBI:60240"/>
    </ligand>
</feature>
<feature type="binding site" evidence="1">
    <location>
        <position position="93"/>
    </location>
    <ligand>
        <name>a divalent metal cation</name>
        <dbReference type="ChEBI" id="CHEBI:60240"/>
    </ligand>
</feature>
<reference key="1">
    <citation type="journal article" date="2003" name="Nat. Biotechnol.">
        <title>The genome sequence of the entomopathogenic bacterium Photorhabdus luminescens.</title>
        <authorList>
            <person name="Duchaud E."/>
            <person name="Rusniok C."/>
            <person name="Frangeul L."/>
            <person name="Buchrieser C."/>
            <person name="Givaudan A."/>
            <person name="Taourit S."/>
            <person name="Bocs S."/>
            <person name="Boursaux-Eude C."/>
            <person name="Chandler M."/>
            <person name="Charles J.-F."/>
            <person name="Dassa E."/>
            <person name="Derose R."/>
            <person name="Derzelle S."/>
            <person name="Freyssinet G."/>
            <person name="Gaudriault S."/>
            <person name="Medigue C."/>
            <person name="Lanois A."/>
            <person name="Powell K."/>
            <person name="Siguier P."/>
            <person name="Vincent R."/>
            <person name="Wingate V."/>
            <person name="Zouine M."/>
            <person name="Glaser P."/>
            <person name="Boemare N."/>
            <person name="Danchin A."/>
            <person name="Kunst F."/>
        </authorList>
    </citation>
    <scope>NUCLEOTIDE SEQUENCE [LARGE SCALE GENOMIC DNA]</scope>
    <source>
        <strain>DSM 15139 / CIP 105565 / TT01</strain>
    </source>
</reference>
<protein>
    <recommendedName>
        <fullName evidence="1">5'/3'-nucleotidase SurE</fullName>
        <ecNumber evidence="1">3.1.3.5</ecNumber>
        <ecNumber evidence="1">3.1.3.6</ecNumber>
    </recommendedName>
    <alternativeName>
        <fullName evidence="1">Exopolyphosphatase</fullName>
        <ecNumber evidence="1">3.6.1.11</ecNumber>
    </alternativeName>
    <alternativeName>
        <fullName evidence="1">Nucleoside monophosphate phosphohydrolase</fullName>
    </alternativeName>
</protein>
<keyword id="KW-0963">Cytoplasm</keyword>
<keyword id="KW-0378">Hydrolase</keyword>
<keyword id="KW-0479">Metal-binding</keyword>
<keyword id="KW-0547">Nucleotide-binding</keyword>
<keyword id="KW-1185">Reference proteome</keyword>
<name>SURE_PHOLL</name>
<proteinExistence type="inferred from homology"/>
<dbReference type="EC" id="3.1.3.5" evidence="1"/>
<dbReference type="EC" id="3.1.3.6" evidence="1"/>
<dbReference type="EC" id="3.6.1.11" evidence="1"/>
<dbReference type="EMBL" id="BX571861">
    <property type="protein sequence ID" value="CAE13011.1"/>
    <property type="molecule type" value="Genomic_DNA"/>
</dbReference>
<dbReference type="RefSeq" id="WP_011145092.1">
    <property type="nucleotide sequence ID" value="NC_005126.1"/>
</dbReference>
<dbReference type="SMR" id="Q7N8K4"/>
<dbReference type="STRING" id="243265.plu0716"/>
<dbReference type="GeneID" id="48847011"/>
<dbReference type="KEGG" id="plu:plu0716"/>
<dbReference type="eggNOG" id="COG0496">
    <property type="taxonomic scope" value="Bacteria"/>
</dbReference>
<dbReference type="HOGENOM" id="CLU_045192_1_2_6"/>
<dbReference type="OrthoDB" id="9780815at2"/>
<dbReference type="Proteomes" id="UP000002514">
    <property type="component" value="Chromosome"/>
</dbReference>
<dbReference type="GO" id="GO:0005737">
    <property type="term" value="C:cytoplasm"/>
    <property type="evidence" value="ECO:0007669"/>
    <property type="project" value="UniProtKB-SubCell"/>
</dbReference>
<dbReference type="GO" id="GO:0008254">
    <property type="term" value="F:3'-nucleotidase activity"/>
    <property type="evidence" value="ECO:0007669"/>
    <property type="project" value="UniProtKB-UniRule"/>
</dbReference>
<dbReference type="GO" id="GO:0008253">
    <property type="term" value="F:5'-nucleotidase activity"/>
    <property type="evidence" value="ECO:0007669"/>
    <property type="project" value="UniProtKB-UniRule"/>
</dbReference>
<dbReference type="GO" id="GO:0004309">
    <property type="term" value="F:exopolyphosphatase activity"/>
    <property type="evidence" value="ECO:0007669"/>
    <property type="project" value="UniProtKB-UniRule"/>
</dbReference>
<dbReference type="GO" id="GO:0046872">
    <property type="term" value="F:metal ion binding"/>
    <property type="evidence" value="ECO:0007669"/>
    <property type="project" value="UniProtKB-UniRule"/>
</dbReference>
<dbReference type="GO" id="GO:0000166">
    <property type="term" value="F:nucleotide binding"/>
    <property type="evidence" value="ECO:0007669"/>
    <property type="project" value="UniProtKB-KW"/>
</dbReference>
<dbReference type="FunFam" id="3.40.1210.10:FF:000001">
    <property type="entry name" value="5'/3'-nucleotidase SurE"/>
    <property type="match status" value="1"/>
</dbReference>
<dbReference type="Gene3D" id="3.40.1210.10">
    <property type="entry name" value="Survival protein SurE-like phosphatase/nucleotidase"/>
    <property type="match status" value="1"/>
</dbReference>
<dbReference type="HAMAP" id="MF_00060">
    <property type="entry name" value="SurE"/>
    <property type="match status" value="1"/>
</dbReference>
<dbReference type="InterPro" id="IPR030048">
    <property type="entry name" value="SurE"/>
</dbReference>
<dbReference type="InterPro" id="IPR002828">
    <property type="entry name" value="SurE-like_Pase/nucleotidase"/>
</dbReference>
<dbReference type="InterPro" id="IPR036523">
    <property type="entry name" value="SurE-like_sf"/>
</dbReference>
<dbReference type="NCBIfam" id="NF001488">
    <property type="entry name" value="PRK00346.1-1"/>
    <property type="match status" value="1"/>
</dbReference>
<dbReference type="NCBIfam" id="NF001489">
    <property type="entry name" value="PRK00346.1-3"/>
    <property type="match status" value="1"/>
</dbReference>
<dbReference type="NCBIfam" id="NF001490">
    <property type="entry name" value="PRK00346.1-4"/>
    <property type="match status" value="1"/>
</dbReference>
<dbReference type="NCBIfam" id="TIGR00087">
    <property type="entry name" value="surE"/>
    <property type="match status" value="1"/>
</dbReference>
<dbReference type="PANTHER" id="PTHR30457">
    <property type="entry name" value="5'-NUCLEOTIDASE SURE"/>
    <property type="match status" value="1"/>
</dbReference>
<dbReference type="PANTHER" id="PTHR30457:SF12">
    <property type="entry name" value="5'_3'-NUCLEOTIDASE SURE"/>
    <property type="match status" value="1"/>
</dbReference>
<dbReference type="Pfam" id="PF01975">
    <property type="entry name" value="SurE"/>
    <property type="match status" value="1"/>
</dbReference>
<dbReference type="SUPFAM" id="SSF64167">
    <property type="entry name" value="SurE-like"/>
    <property type="match status" value="1"/>
</dbReference>
<evidence type="ECO:0000255" key="1">
    <source>
        <dbReference type="HAMAP-Rule" id="MF_00060"/>
    </source>
</evidence>
<organism>
    <name type="scientific">Photorhabdus laumondii subsp. laumondii (strain DSM 15139 / CIP 105565 / TT01)</name>
    <name type="common">Photorhabdus luminescens subsp. laumondii</name>
    <dbReference type="NCBI Taxonomy" id="243265"/>
    <lineage>
        <taxon>Bacteria</taxon>
        <taxon>Pseudomonadati</taxon>
        <taxon>Pseudomonadota</taxon>
        <taxon>Gammaproteobacteria</taxon>
        <taxon>Enterobacterales</taxon>
        <taxon>Morganellaceae</taxon>
        <taxon>Photorhabdus</taxon>
    </lineage>
</organism>
<gene>
    <name evidence="1" type="primary">surE</name>
    <name type="ordered locus">plu0716</name>
</gene>
<accession>Q7N8K4</accession>
<sequence>MLRILLSNDDGVTAPGIQVLAAALRENYHVQVVAPDRNRSGASNALTLDRSLSVNTLENGDISVLGGTPTDCVYLGVNRLVLPRPEIVVSGINRGPNLGDDVIYSGTVAAAMEGRHLGLPALAISLNGELHYQTAAEITCRLLQMLQTTPLRAGNILNVNVPDLPLEHIKGFRVTRCGSRHAAEEVYSMQDPKGNMLYWLGPPGDKHDAGPETDFAAVEQGYVSITPLQVDLTAYKAQALVRDWLAKAEVDGEC</sequence>
<comment type="function">
    <text evidence="1">Nucleotidase with a broad substrate specificity as it can dephosphorylate various ribo- and deoxyribonucleoside 5'-monophosphates and ribonucleoside 3'-monophosphates with highest affinity to 3'-AMP. Also hydrolyzes polyphosphate (exopolyphosphatase activity) with the preference for short-chain-length substrates (P20-25). Might be involved in the regulation of dNTP and NTP pools, and in the turnover of 3'-mononucleotides produced by numerous intracellular RNases (T1, T2, and F) during the degradation of various RNAs.</text>
</comment>
<comment type="catalytic activity">
    <reaction evidence="1">
        <text>a ribonucleoside 5'-phosphate + H2O = a ribonucleoside + phosphate</text>
        <dbReference type="Rhea" id="RHEA:12484"/>
        <dbReference type="ChEBI" id="CHEBI:15377"/>
        <dbReference type="ChEBI" id="CHEBI:18254"/>
        <dbReference type="ChEBI" id="CHEBI:43474"/>
        <dbReference type="ChEBI" id="CHEBI:58043"/>
        <dbReference type="EC" id="3.1.3.5"/>
    </reaction>
</comment>
<comment type="catalytic activity">
    <reaction evidence="1">
        <text>a ribonucleoside 3'-phosphate + H2O = a ribonucleoside + phosphate</text>
        <dbReference type="Rhea" id="RHEA:10144"/>
        <dbReference type="ChEBI" id="CHEBI:13197"/>
        <dbReference type="ChEBI" id="CHEBI:15377"/>
        <dbReference type="ChEBI" id="CHEBI:18254"/>
        <dbReference type="ChEBI" id="CHEBI:43474"/>
        <dbReference type="EC" id="3.1.3.6"/>
    </reaction>
</comment>
<comment type="catalytic activity">
    <reaction evidence="1">
        <text>[phosphate](n) + H2O = [phosphate](n-1) + phosphate + H(+)</text>
        <dbReference type="Rhea" id="RHEA:21528"/>
        <dbReference type="Rhea" id="RHEA-COMP:9859"/>
        <dbReference type="Rhea" id="RHEA-COMP:14279"/>
        <dbReference type="ChEBI" id="CHEBI:15377"/>
        <dbReference type="ChEBI" id="CHEBI:15378"/>
        <dbReference type="ChEBI" id="CHEBI:16838"/>
        <dbReference type="ChEBI" id="CHEBI:43474"/>
        <dbReference type="EC" id="3.6.1.11"/>
    </reaction>
</comment>
<comment type="cofactor">
    <cofactor evidence="1">
        <name>a divalent metal cation</name>
        <dbReference type="ChEBI" id="CHEBI:60240"/>
    </cofactor>
    <text evidence="1">Binds 1 divalent metal cation per subunit.</text>
</comment>
<comment type="subcellular location">
    <subcellularLocation>
        <location evidence="1">Cytoplasm</location>
    </subcellularLocation>
</comment>
<comment type="similarity">
    <text evidence="1">Belongs to the SurE nucleotidase family.</text>
</comment>